<evidence type="ECO:0000255" key="1">
    <source>
        <dbReference type="PROSITE-ProRule" id="PRU00159"/>
    </source>
</evidence>
<evidence type="ECO:0000255" key="2">
    <source>
        <dbReference type="PROSITE-ProRule" id="PRU10027"/>
    </source>
</evidence>
<evidence type="ECO:0000269" key="3">
    <source>
    </source>
</evidence>
<evidence type="ECO:0000269" key="4">
    <source>
    </source>
</evidence>
<evidence type="ECO:0000269" key="5">
    <source>
    </source>
</evidence>
<evidence type="ECO:0000269" key="6">
    <source>
    </source>
</evidence>
<evidence type="ECO:0000269" key="7">
    <source>
    </source>
</evidence>
<evidence type="ECO:0000269" key="8">
    <source>
    </source>
</evidence>
<evidence type="ECO:0000269" key="9">
    <source>
    </source>
</evidence>
<evidence type="ECO:0000269" key="10">
    <source>
    </source>
</evidence>
<evidence type="ECO:0000269" key="11">
    <source>
    </source>
</evidence>
<evidence type="ECO:0000269" key="12">
    <source>
    </source>
</evidence>
<evidence type="ECO:0000269" key="13">
    <source>
    </source>
</evidence>
<evidence type="ECO:0000269" key="14">
    <source>
    </source>
</evidence>
<evidence type="ECO:0000269" key="15">
    <source>
    </source>
</evidence>
<evidence type="ECO:0000269" key="16">
    <source>
    </source>
</evidence>
<evidence type="ECO:0000269" key="17">
    <source>
    </source>
</evidence>
<evidence type="ECO:0000269" key="18">
    <source>
    </source>
</evidence>
<evidence type="ECO:0000269" key="19">
    <source>
    </source>
</evidence>
<evidence type="ECO:0000269" key="20">
    <source>
    </source>
</evidence>
<evidence type="ECO:0000269" key="21">
    <source>
    </source>
</evidence>
<evidence type="ECO:0000269" key="22">
    <source>
    </source>
</evidence>
<evidence type="ECO:0000269" key="23">
    <source>
    </source>
</evidence>
<evidence type="ECO:0000269" key="24">
    <source>
    </source>
</evidence>
<evidence type="ECO:0000269" key="25">
    <source>
    </source>
</evidence>
<evidence type="ECO:0000269" key="26">
    <source>
    </source>
</evidence>
<evidence type="ECO:0000269" key="27">
    <source>
    </source>
</evidence>
<evidence type="ECO:0000269" key="28">
    <source>
    </source>
</evidence>
<evidence type="ECO:0000269" key="29">
    <source>
    </source>
</evidence>
<evidence type="ECO:0000269" key="30">
    <source>
    </source>
</evidence>
<evidence type="ECO:0000269" key="31">
    <source>
    </source>
</evidence>
<evidence type="ECO:0000269" key="32">
    <source>
    </source>
</evidence>
<evidence type="ECO:0000269" key="33">
    <source>
    </source>
</evidence>
<evidence type="ECO:0000269" key="34">
    <source>
    </source>
</evidence>
<evidence type="ECO:0000269" key="35">
    <source>
    </source>
</evidence>
<evidence type="ECO:0000269" key="36">
    <source>
    </source>
</evidence>
<evidence type="ECO:0000269" key="37">
    <source>
    </source>
</evidence>
<evidence type="ECO:0000269" key="38">
    <source>
    </source>
</evidence>
<evidence type="ECO:0000303" key="39">
    <source>
    </source>
</evidence>
<evidence type="ECO:0000303" key="40">
    <source>
    </source>
</evidence>
<evidence type="ECO:0000303" key="41">
    <source>
    </source>
</evidence>
<evidence type="ECO:0000303" key="42">
    <source>
    </source>
</evidence>
<evidence type="ECO:0000303" key="43">
    <source>
    </source>
</evidence>
<evidence type="ECO:0000303" key="44">
    <source>
    </source>
</evidence>
<evidence type="ECO:0000305" key="45"/>
<evidence type="ECO:0000305" key="46">
    <source>
    </source>
</evidence>
<evidence type="ECO:0000312" key="47">
    <source>
        <dbReference type="Araport" id="AT3G48750"/>
    </source>
</evidence>
<evidence type="ECO:0000312" key="48">
    <source>
        <dbReference type="EMBL" id="CAB87903.1"/>
    </source>
</evidence>
<evidence type="ECO:0007744" key="49">
    <source>
    </source>
</evidence>
<sequence length="294" mass="34030">MDQYEKVEKIGEGTYGVVYKARDKVTNETIALKKIRLEQEDEGVPSTAIREISLLKEMQHSNIVKLQDVVHSEKRLYLVFEYLDLDLKKHMDSTPDFSKDLHMIKTYLYQILRGIAYCHSHRVLHRDLKPQNLLIDRRTNSLKLADFGLARAFGIPVRTFTHEVVTLWYRAPEILLGSHHYSTPVDIWSVGCIFAEMISQKPLFPGDSEIDQLFKIFRIMGTPYEDTWRGVTSLPDYKSAFPKWKPTDLETFVPNLDPDGVDLLSKMLLMDPTKRINARAALEHEYFKDLGGMP</sequence>
<feature type="chain" id="PRO_0000085749" description="Cyclin-dependent kinase A-1">
    <location>
        <begin position="1"/>
        <end position="294"/>
    </location>
</feature>
<feature type="domain" description="Protein kinase" evidence="1">
    <location>
        <begin position="4"/>
        <end position="287"/>
    </location>
</feature>
<feature type="active site" description="Proton acceptor" evidence="1 2">
    <location>
        <position position="127"/>
    </location>
</feature>
<feature type="binding site" evidence="1">
    <location>
        <begin position="10"/>
        <end position="18"/>
    </location>
    <ligand>
        <name>ATP</name>
        <dbReference type="ChEBI" id="CHEBI:30616"/>
    </ligand>
</feature>
<feature type="binding site" evidence="1">
    <location>
        <position position="33"/>
    </location>
    <ligand>
        <name>ATP</name>
        <dbReference type="ChEBI" id="CHEBI:30616"/>
    </ligand>
</feature>
<feature type="modified residue" description="Phosphotyrosine" evidence="27">
    <location>
        <position position="15"/>
    </location>
</feature>
<feature type="modified residue" description="Phosphothreonine" evidence="29 49">
    <location>
        <position position="161"/>
    </location>
</feature>
<feature type="mutagenesis site" description="Increased kinase activity; when associated with F-15." evidence="3">
    <original>T</original>
    <variation>A</variation>
    <location>
        <position position="14"/>
    </location>
</feature>
<feature type="mutagenesis site" description="Abolishes phosphorylation by WEE1. Increased kinase activity; when associated with A-14." evidence="3 27">
    <original>Y</original>
    <variation>F</variation>
    <location>
        <position position="15"/>
    </location>
</feature>
<feature type="mutagenesis site" description="Decreased kinase activity and disturbed cell cycle. Reduced frequency of cell division during embryo development. Altered stomatal production. Interacts with SPCH." evidence="3 7 32">
    <original>D</original>
    <variation>N</variation>
    <location>
        <position position="146"/>
    </location>
</feature>
<feature type="mutagenesis site" description="Decreased kinase activity and disturbed cell cycle." evidence="3">
    <original>P</original>
    <variation>L</variation>
    <location>
        <position position="156"/>
    </location>
</feature>
<feature type="mutagenesis site" description="Strong reduction in kinase activity and ability to bind substrate. Strong reduction in plant growth. Sterile plants." evidence="29">
    <original>T</original>
    <variation>D</variation>
    <location>
        <position position="161"/>
    </location>
</feature>
<feature type="mutagenesis site" description="Strong reduction in kinase activity and ability to bind substrate." evidence="29">
    <original>T</original>
    <variation>V</variation>
    <location>
        <position position="161"/>
    </location>
</feature>
<feature type="mutagenesis site" description="Decreased kinase activity and disturbed cell cycle." evidence="3">
    <original>T</original>
    <variation>I</variation>
    <location>
        <position position="166"/>
    </location>
</feature>
<feature type="mutagenesis site" description="No change in kinase activity, but disturbed cell cycle. Loss of interaction with CKS1." evidence="3">
    <location>
        <begin position="234"/>
        <end position="236"/>
    </location>
</feature>
<gene>
    <name evidence="39" type="primary">CDKA-1</name>
    <name evidence="41 42" type="synonym">CDC2</name>
    <name evidence="40 43" type="synonym">CDC2A</name>
    <name evidence="47" type="ordered locus">At3g48750</name>
    <name evidence="48" type="ORF">T21J18.20</name>
</gene>
<dbReference type="EC" id="2.7.11.22" evidence="19 27"/>
<dbReference type="EC" id="2.7.11.23" evidence="19 27"/>
<dbReference type="EMBL" id="M59198">
    <property type="protein sequence ID" value="AAA32831.1"/>
    <property type="molecule type" value="mRNA"/>
</dbReference>
<dbReference type="EMBL" id="S45387">
    <property type="protein sequence ID" value="AAB23643.1"/>
    <property type="molecule type" value="mRNA"/>
</dbReference>
<dbReference type="EMBL" id="X57839">
    <property type="protein sequence ID" value="CAA40971.1"/>
    <property type="molecule type" value="mRNA"/>
</dbReference>
<dbReference type="EMBL" id="D10850">
    <property type="protein sequence ID" value="BAA01623.1"/>
    <property type="molecule type" value="Genomic_DNA"/>
</dbReference>
<dbReference type="EMBL" id="AL132963">
    <property type="protein sequence ID" value="CAB87903.1"/>
    <property type="status" value="ALT_SEQ"/>
    <property type="molecule type" value="Genomic_DNA"/>
</dbReference>
<dbReference type="EMBL" id="CP002686">
    <property type="protein sequence ID" value="AEE78452.1"/>
    <property type="molecule type" value="Genomic_DNA"/>
</dbReference>
<dbReference type="EMBL" id="AY090353">
    <property type="protein sequence ID" value="AAL91258.1"/>
    <property type="status" value="ALT_FRAME"/>
    <property type="molecule type" value="mRNA"/>
</dbReference>
<dbReference type="EMBL" id="BT024706">
    <property type="protein sequence ID" value="ABD59044.1"/>
    <property type="molecule type" value="mRNA"/>
</dbReference>
<dbReference type="EMBL" id="AK226373">
    <property type="protein sequence ID" value="BAE98520.1"/>
    <property type="molecule type" value="mRNA"/>
</dbReference>
<dbReference type="EMBL" id="AY085153">
    <property type="protein sequence ID" value="AAM61706.1"/>
    <property type="molecule type" value="mRNA"/>
</dbReference>
<dbReference type="PIR" id="S23095">
    <property type="entry name" value="S23095"/>
</dbReference>
<dbReference type="PIR" id="T49271">
    <property type="entry name" value="T49271"/>
</dbReference>
<dbReference type="RefSeq" id="NP_566911.1">
    <property type="nucleotide sequence ID" value="NM_114734.4"/>
</dbReference>
<dbReference type="SMR" id="P24100"/>
<dbReference type="BioGRID" id="9354">
    <property type="interactions" value="107"/>
</dbReference>
<dbReference type="FunCoup" id="P24100">
    <property type="interactions" value="4152"/>
</dbReference>
<dbReference type="IntAct" id="P24100">
    <property type="interactions" value="74"/>
</dbReference>
<dbReference type="STRING" id="3702.P24100"/>
<dbReference type="iPTMnet" id="P24100"/>
<dbReference type="PaxDb" id="3702-AT3G48750.1"/>
<dbReference type="ProteomicsDB" id="220603"/>
<dbReference type="EnsemblPlants" id="AT3G48750.1">
    <property type="protein sequence ID" value="AT3G48750.1"/>
    <property type="gene ID" value="AT3G48750"/>
</dbReference>
<dbReference type="GeneID" id="824036"/>
<dbReference type="Gramene" id="AT3G48750.1">
    <property type="protein sequence ID" value="AT3G48750.1"/>
    <property type="gene ID" value="AT3G48750"/>
</dbReference>
<dbReference type="KEGG" id="ath:AT3G48750"/>
<dbReference type="Araport" id="AT3G48750"/>
<dbReference type="TAIR" id="AT3G48750">
    <property type="gene designation" value="CDC2"/>
</dbReference>
<dbReference type="eggNOG" id="KOG0594">
    <property type="taxonomic scope" value="Eukaryota"/>
</dbReference>
<dbReference type="HOGENOM" id="CLU_000288_181_1_1"/>
<dbReference type="InParanoid" id="P24100"/>
<dbReference type="OMA" id="WSLACIY"/>
<dbReference type="OrthoDB" id="1732493at2759"/>
<dbReference type="PhylomeDB" id="P24100"/>
<dbReference type="BRENDA" id="2.7.11.22">
    <property type="organism ID" value="399"/>
</dbReference>
<dbReference type="CD-CODE" id="4299E36E">
    <property type="entry name" value="Nucleolus"/>
</dbReference>
<dbReference type="PRO" id="PR:P24100"/>
<dbReference type="Proteomes" id="UP000006548">
    <property type="component" value="Chromosome 3"/>
</dbReference>
<dbReference type="ExpressionAtlas" id="P24100">
    <property type="expression patterns" value="baseline and differential"/>
</dbReference>
<dbReference type="GO" id="GO:0010005">
    <property type="term" value="C:cortical microtubule, transverse to long axis"/>
    <property type="evidence" value="ECO:0000314"/>
    <property type="project" value="TAIR"/>
</dbReference>
<dbReference type="GO" id="GO:0005737">
    <property type="term" value="C:cytoplasm"/>
    <property type="evidence" value="ECO:0000314"/>
    <property type="project" value="TAIR"/>
</dbReference>
<dbReference type="GO" id="GO:0005634">
    <property type="term" value="C:nucleus"/>
    <property type="evidence" value="ECO:0000314"/>
    <property type="project" value="TAIR"/>
</dbReference>
<dbReference type="GO" id="GO:0009574">
    <property type="term" value="C:preprophase band"/>
    <property type="evidence" value="ECO:0000304"/>
    <property type="project" value="TAIR"/>
</dbReference>
<dbReference type="GO" id="GO:0005524">
    <property type="term" value="F:ATP binding"/>
    <property type="evidence" value="ECO:0007669"/>
    <property type="project" value="UniProtKB-KW"/>
</dbReference>
<dbReference type="GO" id="GO:0004693">
    <property type="term" value="F:cyclin-dependent protein serine/threonine kinase activity"/>
    <property type="evidence" value="ECO:0000250"/>
    <property type="project" value="TAIR"/>
</dbReference>
<dbReference type="GO" id="GO:0016301">
    <property type="term" value="F:kinase activity"/>
    <property type="evidence" value="ECO:0000315"/>
    <property type="project" value="TAIR"/>
</dbReference>
<dbReference type="GO" id="GO:0004672">
    <property type="term" value="F:protein kinase activity"/>
    <property type="evidence" value="ECO:0000314"/>
    <property type="project" value="TAIR"/>
</dbReference>
<dbReference type="GO" id="GO:0106310">
    <property type="term" value="F:protein serine kinase activity"/>
    <property type="evidence" value="ECO:0007669"/>
    <property type="project" value="RHEA"/>
</dbReference>
<dbReference type="GO" id="GO:0008353">
    <property type="term" value="F:RNA polymerase II CTD heptapeptide repeat kinase activity"/>
    <property type="evidence" value="ECO:0007669"/>
    <property type="project" value="UniProtKB-EC"/>
</dbReference>
<dbReference type="GO" id="GO:0008356">
    <property type="term" value="P:asymmetric cell division"/>
    <property type="evidence" value="ECO:0000316"/>
    <property type="project" value="TAIR"/>
</dbReference>
<dbReference type="GO" id="GO:0000911">
    <property type="term" value="P:cytokinesis by cell plate formation"/>
    <property type="evidence" value="ECO:0000315"/>
    <property type="project" value="TAIR"/>
</dbReference>
<dbReference type="GO" id="GO:0042023">
    <property type="term" value="P:DNA endoreduplication"/>
    <property type="evidence" value="ECO:0000315"/>
    <property type="project" value="TAIR"/>
</dbReference>
<dbReference type="GO" id="GO:0009793">
    <property type="term" value="P:embryo development ending in seed dormancy"/>
    <property type="evidence" value="ECO:0000315"/>
    <property type="project" value="TAIR"/>
</dbReference>
<dbReference type="GO" id="GO:0048229">
    <property type="term" value="P:gametophyte development"/>
    <property type="evidence" value="ECO:0000315"/>
    <property type="project" value="TAIR"/>
</dbReference>
<dbReference type="GO" id="GO:0010235">
    <property type="term" value="P:guard mother cell cytokinesis"/>
    <property type="evidence" value="ECO:0000315"/>
    <property type="project" value="UniProtKB"/>
</dbReference>
<dbReference type="GO" id="GO:0010444">
    <property type="term" value="P:guard mother cell differentiation"/>
    <property type="evidence" value="ECO:0000315"/>
    <property type="project" value="UniProtKB"/>
</dbReference>
<dbReference type="GO" id="GO:0033206">
    <property type="term" value="P:meiotic cytokinesis"/>
    <property type="evidence" value="ECO:0000315"/>
    <property type="project" value="TAIR"/>
</dbReference>
<dbReference type="GO" id="GO:0009555">
    <property type="term" value="P:pollen development"/>
    <property type="evidence" value="ECO:0000315"/>
    <property type="project" value="UniProtKB"/>
</dbReference>
<dbReference type="GO" id="GO:0008284">
    <property type="term" value="P:positive regulation of cell population proliferation"/>
    <property type="evidence" value="ECO:0000315"/>
    <property type="project" value="TAIR"/>
</dbReference>
<dbReference type="GO" id="GO:1902806">
    <property type="term" value="P:regulation of cell cycle G1/S phase transition"/>
    <property type="evidence" value="ECO:0000315"/>
    <property type="project" value="UniProtKB"/>
</dbReference>
<dbReference type="GO" id="GO:0040020">
    <property type="term" value="P:regulation of meiotic nuclear division"/>
    <property type="evidence" value="ECO:0000315"/>
    <property type="project" value="TAIR"/>
</dbReference>
<dbReference type="GO" id="GO:0009409">
    <property type="term" value="P:response to cold"/>
    <property type="evidence" value="ECO:0000270"/>
    <property type="project" value="TAIR"/>
</dbReference>
<dbReference type="GO" id="GO:0098725">
    <property type="term" value="P:symmetric cell division"/>
    <property type="evidence" value="ECO:0000315"/>
    <property type="project" value="UniProtKB"/>
</dbReference>
<dbReference type="CDD" id="cd07835">
    <property type="entry name" value="STKc_CDK1_CdkB_like"/>
    <property type="match status" value="1"/>
</dbReference>
<dbReference type="FunFam" id="3.30.200.20:FF:000187">
    <property type="entry name" value="Cell division control protein 2"/>
    <property type="match status" value="1"/>
</dbReference>
<dbReference type="FunFam" id="1.10.510.10:FF:000280">
    <property type="entry name" value="Cell division control protein 2 homolog"/>
    <property type="match status" value="1"/>
</dbReference>
<dbReference type="Gene3D" id="3.30.200.20">
    <property type="entry name" value="Phosphorylase Kinase, domain 1"/>
    <property type="match status" value="1"/>
</dbReference>
<dbReference type="Gene3D" id="1.10.510.10">
    <property type="entry name" value="Transferase(Phosphotransferase) domain 1"/>
    <property type="match status" value="1"/>
</dbReference>
<dbReference type="InterPro" id="IPR050108">
    <property type="entry name" value="CDK"/>
</dbReference>
<dbReference type="InterPro" id="IPR011009">
    <property type="entry name" value="Kinase-like_dom_sf"/>
</dbReference>
<dbReference type="InterPro" id="IPR000719">
    <property type="entry name" value="Prot_kinase_dom"/>
</dbReference>
<dbReference type="InterPro" id="IPR017441">
    <property type="entry name" value="Protein_kinase_ATP_BS"/>
</dbReference>
<dbReference type="InterPro" id="IPR008271">
    <property type="entry name" value="Ser/Thr_kinase_AS"/>
</dbReference>
<dbReference type="PANTHER" id="PTHR24056">
    <property type="entry name" value="CELL DIVISION PROTEIN KINASE"/>
    <property type="match status" value="1"/>
</dbReference>
<dbReference type="PANTHER" id="PTHR24056:SF548">
    <property type="entry name" value="CYCLIN-DEPENDENT KINASE A-1"/>
    <property type="match status" value="1"/>
</dbReference>
<dbReference type="Pfam" id="PF00069">
    <property type="entry name" value="Pkinase"/>
    <property type="match status" value="1"/>
</dbReference>
<dbReference type="SMART" id="SM00220">
    <property type="entry name" value="S_TKc"/>
    <property type="match status" value="1"/>
</dbReference>
<dbReference type="SUPFAM" id="SSF56112">
    <property type="entry name" value="Protein kinase-like (PK-like)"/>
    <property type="match status" value="1"/>
</dbReference>
<dbReference type="PROSITE" id="PS00107">
    <property type="entry name" value="PROTEIN_KINASE_ATP"/>
    <property type="match status" value="1"/>
</dbReference>
<dbReference type="PROSITE" id="PS50011">
    <property type="entry name" value="PROTEIN_KINASE_DOM"/>
    <property type="match status" value="1"/>
</dbReference>
<dbReference type="PROSITE" id="PS00108">
    <property type="entry name" value="PROTEIN_KINASE_ST"/>
    <property type="match status" value="1"/>
</dbReference>
<organism>
    <name type="scientific">Arabidopsis thaliana</name>
    <name type="common">Mouse-ear cress</name>
    <dbReference type="NCBI Taxonomy" id="3702"/>
    <lineage>
        <taxon>Eukaryota</taxon>
        <taxon>Viridiplantae</taxon>
        <taxon>Streptophyta</taxon>
        <taxon>Embryophyta</taxon>
        <taxon>Tracheophyta</taxon>
        <taxon>Spermatophyta</taxon>
        <taxon>Magnoliopsida</taxon>
        <taxon>eudicotyledons</taxon>
        <taxon>Gunneridae</taxon>
        <taxon>Pentapetalae</taxon>
        <taxon>rosids</taxon>
        <taxon>malvids</taxon>
        <taxon>Brassicales</taxon>
        <taxon>Brassicaceae</taxon>
        <taxon>Camelineae</taxon>
        <taxon>Arabidopsis</taxon>
    </lineage>
</organism>
<comment type="function">
    <text evidence="7 23 29 31 32">Involved in the control of the cell cycle. Essential for both G1/S and G2/M (mitosis) phase transitions. Functions in cell morphogenesis as well as cell proliferation. Required for cell division (entry into mitosis) of the generative cell in male gametogenesis. Required to trigger guard mother cells (GMC) symmetric divisions at the late stage of stomatal development, probably via the regulation of G1 to S transition in the cell cycle. Required for the function of SPCH in entering the stomatal lineage (PubMed:25680231). Promotes divisions in the guard cells (GCs) after the guard mother cells (GMC) symmetric division when in the presence of CYCD3-2 via the phosphorylation of SPCH (PubMed:24687979, PubMed:25680231).</text>
</comment>
<comment type="catalytic activity">
    <reaction evidence="19 27">
        <text>L-seryl-[protein] + ATP = O-phospho-L-seryl-[protein] + ADP + H(+)</text>
        <dbReference type="Rhea" id="RHEA:17989"/>
        <dbReference type="Rhea" id="RHEA-COMP:9863"/>
        <dbReference type="Rhea" id="RHEA-COMP:11604"/>
        <dbReference type="ChEBI" id="CHEBI:15378"/>
        <dbReference type="ChEBI" id="CHEBI:29999"/>
        <dbReference type="ChEBI" id="CHEBI:30616"/>
        <dbReference type="ChEBI" id="CHEBI:83421"/>
        <dbReference type="ChEBI" id="CHEBI:456216"/>
        <dbReference type="EC" id="2.7.11.22"/>
    </reaction>
</comment>
<comment type="catalytic activity">
    <reaction evidence="19 27">
        <text>L-threonyl-[protein] + ATP = O-phospho-L-threonyl-[protein] + ADP + H(+)</text>
        <dbReference type="Rhea" id="RHEA:46608"/>
        <dbReference type="Rhea" id="RHEA-COMP:11060"/>
        <dbReference type="Rhea" id="RHEA-COMP:11605"/>
        <dbReference type="ChEBI" id="CHEBI:15378"/>
        <dbReference type="ChEBI" id="CHEBI:30013"/>
        <dbReference type="ChEBI" id="CHEBI:30616"/>
        <dbReference type="ChEBI" id="CHEBI:61977"/>
        <dbReference type="ChEBI" id="CHEBI:456216"/>
        <dbReference type="EC" id="2.7.11.22"/>
    </reaction>
</comment>
<comment type="catalytic activity">
    <reaction evidence="19 27">
        <text>[DNA-directed RNA polymerase] + ATP = phospho-[DNA-directed RNA polymerase] + ADP + H(+)</text>
        <dbReference type="Rhea" id="RHEA:10216"/>
        <dbReference type="Rhea" id="RHEA-COMP:11321"/>
        <dbReference type="Rhea" id="RHEA-COMP:11322"/>
        <dbReference type="ChEBI" id="CHEBI:15378"/>
        <dbReference type="ChEBI" id="CHEBI:30616"/>
        <dbReference type="ChEBI" id="CHEBI:43176"/>
        <dbReference type="ChEBI" id="CHEBI:68546"/>
        <dbReference type="ChEBI" id="CHEBI:456216"/>
        <dbReference type="EC" id="2.7.11.23"/>
    </reaction>
</comment>
<comment type="activity regulation">
    <text evidence="19 20 27">CDK kinase activated by CDKF-1. CDK kinase activity inhibited by KRP1/ICK1, KRP2/ICK2, KRP3/ICK6, KRP4/ICK7, KRP5/ICK3, KRP6/ICK4 and KRP7/ICK5. Down-regulated by phosphorylation by WEE1.</text>
</comment>
<comment type="subunit">
    <text evidence="3 4 6 9 10 11 12 13 14 15 16 17 18 19 21 22 24 25 26 27 28 30 31 32 33 36 37 38">Interacts with CDT1A, CYCA2-3, CYCD2-1, CYCD3-1, CYCD4-1, CYCD4-2, CYCH1-1, CYCU1-1, CYCU2-1, CYCU2-2, CYCU3-1, CYCU4-1, CYCU4-2, CYCU4-3, CKS1, KRP2/ICK2, KRP3/ICK6, KRP4/ICK7, KRP6/ICK4, KRP7/ICK5, and C-terminal domain of KRP1/ICK1. Interacts with WEE1 and TIF4A-1/EIF4A-1. Interacts with PAS2; when phosphorylated at Tyr-15. Interacts with SMR3, SMR4, SMR5, SMR6, SMR8 and At4g14310. Binds to CYCD3-2 (PubMed:24687979). Component of a DREAM-like complex which modulates a variety of developmentally regulated genes and of the mitotic genes in proliferating and differentiated cells. Interacts with MYB3R3 at later and with MYB3R4 at earlier stages of leaf development (PubMed:26069325). May interact with SPCH (PubMed:25680231).</text>
</comment>
<comment type="interaction">
    <interactant intactId="EBI-371713">
        <id>P24100</id>
    </interactant>
    <interactant intactId="EBI-1253127">
        <id>O23249</id>
        <label>CKS1</label>
    </interactant>
    <organismsDiffer>false</organismsDiffer>
    <experiments>9</experiments>
</comment>
<comment type="interaction">
    <interactant intactId="EBI-371713">
        <id>P24100</id>
    </interactant>
    <interactant intactId="EBI-1253160">
        <id>P42752</id>
        <label>CYCD2-1</label>
    </interactant>
    <organismsDiffer>false</organismsDiffer>
    <experiments>4</experiments>
</comment>
<comment type="interaction">
    <interactant intactId="EBI-371713">
        <id>P24100</id>
    </interactant>
    <interactant intactId="EBI-1253610">
        <id>P42753</id>
        <label>CYCD3-1</label>
    </interactant>
    <organismsDiffer>false</organismsDiffer>
    <experiments>5</experiments>
</comment>
<comment type="interaction">
    <interactant intactId="EBI-371713">
        <id>P24100</id>
    </interactant>
    <interactant intactId="EBI-1253202">
        <id>Q8LGA1</id>
        <label>CYCD4-1</label>
    </interactant>
    <organismsDiffer>false</organismsDiffer>
    <experiments>4</experiments>
</comment>
<comment type="interaction">
    <interactant intactId="EBI-371713">
        <id>P24100</id>
    </interactant>
    <interactant intactId="EBI-1773749">
        <id>Q9LJ45</id>
        <label>CYCU1-1</label>
    </interactant>
    <organismsDiffer>false</organismsDiffer>
    <experiments>2</experiments>
</comment>
<comment type="interaction">
    <interactant intactId="EBI-371713">
        <id>P24100</id>
    </interactant>
    <interactant intactId="EBI-1773819">
        <id>O80513</id>
        <label>CYCU4-1</label>
    </interactant>
    <organismsDiffer>false</organismsDiffer>
    <experiments>2</experiments>
</comment>
<comment type="interaction">
    <interactant intactId="EBI-371713">
        <id>P24100</id>
    </interactant>
    <interactant intactId="EBI-1773829">
        <id>Q9FKF6</id>
        <label>CYCU4-3</label>
    </interactant>
    <organismsDiffer>false</organismsDiffer>
    <experiments>2</experiments>
</comment>
<comment type="interaction">
    <interactant intactId="EBI-371713">
        <id>P24100</id>
    </interactant>
    <interactant intactId="EBI-371706">
        <id>P41376</id>
        <label>EIF4A1</label>
    </interactant>
    <organismsDiffer>false</organismsDiffer>
    <experiments>2</experiments>
</comment>
<comment type="interaction">
    <interactant intactId="EBI-371713">
        <id>P24100</id>
    </interactant>
    <interactant intactId="EBI-1636730">
        <id>Q67Y93</id>
        <label>KRP1</label>
    </interactant>
    <organismsDiffer>false</organismsDiffer>
    <experiments>10</experiments>
</comment>
<comment type="interaction">
    <interactant intactId="EBI-371713">
        <id>P24100</id>
    </interactant>
    <interactant intactId="EBI-1636748">
        <id>Q9SCR2</id>
        <label>KRP2</label>
    </interactant>
    <organismsDiffer>false</organismsDiffer>
    <experiments>6</experiments>
</comment>
<comment type="interaction">
    <interactant intactId="EBI-371713">
        <id>P24100</id>
    </interactant>
    <interactant intactId="EBI-1773302">
        <id>Q9FKB5</id>
        <label>KRP3</label>
    </interactant>
    <organismsDiffer>false</organismsDiffer>
    <experiments>4</experiments>
</comment>
<comment type="interaction">
    <interactant intactId="EBI-371713">
        <id>P24100</id>
    </interactant>
    <interactant intactId="EBI-1253225">
        <id>Q8GYJ3</id>
        <label>KRP4</label>
    </interactant>
    <organismsDiffer>false</organismsDiffer>
    <experiments>4</experiments>
</comment>
<comment type="interaction">
    <interactant intactId="EBI-371713">
        <id>P24100</id>
    </interactant>
    <interactant intactId="EBI-1636764">
        <id>Q9LRY0</id>
        <label>KRP5</label>
    </interactant>
    <organismsDiffer>false</organismsDiffer>
    <experiments>3</experiments>
</comment>
<comment type="interaction">
    <interactant intactId="EBI-371713">
        <id>P24100</id>
    </interactant>
    <interactant intactId="EBI-1253171">
        <id>Q0WNX9</id>
        <label>KRP6</label>
    </interactant>
    <organismsDiffer>false</organismsDiffer>
    <experiments>3</experiments>
</comment>
<comment type="interaction">
    <interactant intactId="EBI-371713">
        <id>P24100</id>
    </interactant>
    <interactant intactId="EBI-1773344">
        <id>Q94CL9</id>
        <label>KRP7</label>
    </interactant>
    <organismsDiffer>false</organismsDiffer>
    <experiments>3</experiments>
</comment>
<comment type="subcellular location">
    <subcellularLocation>
        <location>Cytoplasm</location>
    </subcellularLocation>
    <subcellularLocation>
        <location>Nucleus</location>
    </subcellularLocation>
    <text>Mainly cytoplasmic. Nuclear distribution increases after binding to ICK1/KRP1.</text>
</comment>
<comment type="tissue specificity">
    <text evidence="34">Expressed in roots, stems, flowers and siliques.</text>
</comment>
<comment type="developmental stage">
    <text evidence="5 34">Expressed throughout the cell cycle. Expressed in actively dividing cells: root and shoot apical meristems, leaf primordia and emerging lateral root meristem. Expressed in light-grown seedlings from 1 up to 7 days after germination with a peak at 2 and 3 days.</text>
</comment>
<comment type="induction">
    <text evidence="8 28 35">By nematode infection in roots. Down-regulated by salt stress in root meristem and replication blocking agents (hydroxyurea and aphidicolin).</text>
</comment>
<comment type="PTM">
    <text evidence="27 28 29">Phosphorylated at Tyr-15 by WEE1. Phosphorylation at Thr-161 is important for the kinase activity and substrate binding. Binding to the anti-phosphatase PAS2 prevents dephosphorylation.</text>
</comment>
<comment type="disruption phenotype">
    <text evidence="23 31 32">Plants display lethal male gametophyte (PubMed:16460514, PubMed:25680231). Impaired stomata formation with arrested guard mother cells (GMC) divisions (PubMed:25680231). Impaired last mitotic division in the male gametophyte, leading to 50 percent of pollen with two gametes (PubMed:25680231). The double mutant flp-1 myb88 displays an enhanced stomatal phenotype with more and larger stomatal clusters. Triple mutants cdka;1 flp-1 myb88 don't have guard cells stacks but accumulates sGCs (PubMed:24687979).</text>
</comment>
<comment type="similarity">
    <text evidence="45">Belongs to the protein kinase superfamily. CMGC Ser/Thr protein kinase family. CDC2/CDKX subfamily.</text>
</comment>
<comment type="sequence caution" evidence="45">
    <conflict type="frameshift">
        <sequence resource="EMBL-CDS" id="AAL91258"/>
    </conflict>
</comment>
<comment type="sequence caution" evidence="45">
    <conflict type="erroneous gene model prediction">
        <sequence resource="EMBL-CDS" id="CAB87903"/>
    </conflict>
</comment>
<proteinExistence type="evidence at protein level"/>
<keyword id="KW-0067">ATP-binding</keyword>
<keyword id="KW-0131">Cell cycle</keyword>
<keyword id="KW-0132">Cell division</keyword>
<keyword id="KW-0963">Cytoplasm</keyword>
<keyword id="KW-0418">Kinase</keyword>
<keyword id="KW-0498">Mitosis</keyword>
<keyword id="KW-0547">Nucleotide-binding</keyword>
<keyword id="KW-0539">Nucleus</keyword>
<keyword id="KW-0597">Phosphoprotein</keyword>
<keyword id="KW-1185">Reference proteome</keyword>
<keyword id="KW-0723">Serine/threonine-protein kinase</keyword>
<keyword id="KW-0808">Transferase</keyword>
<reference key="1">
    <citation type="journal article" date="1991" name="Gene">
        <title>Identification of two cell-cycle-controlling cdc2 gene homologs in Arabidopsis thaliana.</title>
        <authorList>
            <person name="Hirayama T."/>
            <person name="Imajuku Y."/>
            <person name="Anai T."/>
            <person name="Matsui M."/>
            <person name="Oka A."/>
        </authorList>
    </citation>
    <scope>NUCLEOTIDE SEQUENCE [MRNA]</scope>
    <source>
        <strain>cv. Columbia</strain>
    </source>
</reference>
<reference key="2">
    <citation type="journal article" date="1991" name="Plant Cell">
        <title>The Arabidopsis functional homolog of the p34cdc2 protein kinase.</title>
        <authorList>
            <person name="Ferreira P.C.G."/>
            <person name="Hemerly A.S."/>
            <person name="Villarroel R."/>
            <person name="van Montagu M."/>
            <person name="Inze D."/>
        </authorList>
    </citation>
    <scope>NUCLEOTIDE SEQUENCE [MRNA]</scope>
    <source>
        <strain>cv. Columbia</strain>
    </source>
</reference>
<reference key="3">
    <citation type="journal article" date="1992" name="Biochem. Soc. Trans.">
        <title>Control of cell division in plants.</title>
        <authorList>
            <person name="Inze D."/>
            <person name="Ferreira P.C.G."/>
            <person name="Hemerly A.S."/>
            <person name="van Montagu M."/>
        </authorList>
    </citation>
    <scope>NUCLEOTIDE SEQUENCE [MRNA]</scope>
    <source>
        <strain>cv. Columbia</strain>
    </source>
</reference>
<reference key="4">
    <citation type="journal article" date="1992" name="FEBS Lett.">
        <title>Exon-intron organization of the Arabidopsis thaliana protein kinase genes CDC2a and CDC2b.</title>
        <authorList>
            <person name="Imajuku Y."/>
            <person name="Hirayama T."/>
            <person name="Endoh H."/>
            <person name="Oka A."/>
        </authorList>
    </citation>
    <scope>NUCLEOTIDE SEQUENCE [GENOMIC DNA]</scope>
    <source>
        <strain>cv. Columbia</strain>
    </source>
</reference>
<reference key="5">
    <citation type="journal article" date="2000" name="Nature">
        <title>Sequence and analysis of chromosome 3 of the plant Arabidopsis thaliana.</title>
        <authorList>
            <person name="Salanoubat M."/>
            <person name="Lemcke K."/>
            <person name="Rieger M."/>
            <person name="Ansorge W."/>
            <person name="Unseld M."/>
            <person name="Fartmann B."/>
            <person name="Valle G."/>
            <person name="Bloecker H."/>
            <person name="Perez-Alonso M."/>
            <person name="Obermaier B."/>
            <person name="Delseny M."/>
            <person name="Boutry M."/>
            <person name="Grivell L.A."/>
            <person name="Mache R."/>
            <person name="Puigdomenech P."/>
            <person name="De Simone V."/>
            <person name="Choisne N."/>
            <person name="Artiguenave F."/>
            <person name="Robert C."/>
            <person name="Brottier P."/>
            <person name="Wincker P."/>
            <person name="Cattolico L."/>
            <person name="Weissenbach J."/>
            <person name="Saurin W."/>
            <person name="Quetier F."/>
            <person name="Schaefer M."/>
            <person name="Mueller-Auer S."/>
            <person name="Gabel C."/>
            <person name="Fuchs M."/>
            <person name="Benes V."/>
            <person name="Wurmbach E."/>
            <person name="Drzonek H."/>
            <person name="Erfle H."/>
            <person name="Jordan N."/>
            <person name="Bangert S."/>
            <person name="Wiedelmann R."/>
            <person name="Kranz H."/>
            <person name="Voss H."/>
            <person name="Holland R."/>
            <person name="Brandt P."/>
            <person name="Nyakatura G."/>
            <person name="Vezzi A."/>
            <person name="D'Angelo M."/>
            <person name="Pallavicini A."/>
            <person name="Toppo S."/>
            <person name="Simionati B."/>
            <person name="Conrad A."/>
            <person name="Hornischer K."/>
            <person name="Kauer G."/>
            <person name="Loehnert T.-H."/>
            <person name="Nordsiek G."/>
            <person name="Reichelt J."/>
            <person name="Scharfe M."/>
            <person name="Schoen O."/>
            <person name="Bargues M."/>
            <person name="Terol J."/>
            <person name="Climent J."/>
            <person name="Navarro P."/>
            <person name="Collado C."/>
            <person name="Perez-Perez A."/>
            <person name="Ottenwaelder B."/>
            <person name="Duchemin D."/>
            <person name="Cooke R."/>
            <person name="Laudie M."/>
            <person name="Berger-Llauro C."/>
            <person name="Purnelle B."/>
            <person name="Masuy D."/>
            <person name="de Haan M."/>
            <person name="Maarse A.C."/>
            <person name="Alcaraz J.-P."/>
            <person name="Cottet A."/>
            <person name="Casacuberta E."/>
            <person name="Monfort A."/>
            <person name="Argiriou A."/>
            <person name="Flores M."/>
            <person name="Liguori R."/>
            <person name="Vitale D."/>
            <person name="Mannhaupt G."/>
            <person name="Haase D."/>
            <person name="Schoof H."/>
            <person name="Rudd S."/>
            <person name="Zaccaria P."/>
            <person name="Mewes H.-W."/>
            <person name="Mayer K.F.X."/>
            <person name="Kaul S."/>
            <person name="Town C.D."/>
            <person name="Koo H.L."/>
            <person name="Tallon L.J."/>
            <person name="Jenkins J."/>
            <person name="Rooney T."/>
            <person name="Rizzo M."/>
            <person name="Walts A."/>
            <person name="Utterback T."/>
            <person name="Fujii C.Y."/>
            <person name="Shea T.P."/>
            <person name="Creasy T.H."/>
            <person name="Haas B."/>
            <person name="Maiti R."/>
            <person name="Wu D."/>
            <person name="Peterson J."/>
            <person name="Van Aken S."/>
            <person name="Pai G."/>
            <person name="Militscher J."/>
            <person name="Sellers P."/>
            <person name="Gill J.E."/>
            <person name="Feldblyum T.V."/>
            <person name="Preuss D."/>
            <person name="Lin X."/>
            <person name="Nierman W.C."/>
            <person name="Salzberg S.L."/>
            <person name="White O."/>
            <person name="Venter J.C."/>
            <person name="Fraser C.M."/>
            <person name="Kaneko T."/>
            <person name="Nakamura Y."/>
            <person name="Sato S."/>
            <person name="Kato T."/>
            <person name="Asamizu E."/>
            <person name="Sasamoto S."/>
            <person name="Kimura T."/>
            <person name="Idesawa K."/>
            <person name="Kawashima K."/>
            <person name="Kishida Y."/>
            <person name="Kiyokawa C."/>
            <person name="Kohara M."/>
            <person name="Matsumoto M."/>
            <person name="Matsuno A."/>
            <person name="Muraki A."/>
            <person name="Nakayama S."/>
            <person name="Nakazaki N."/>
            <person name="Shinpo S."/>
            <person name="Takeuchi C."/>
            <person name="Wada T."/>
            <person name="Watanabe A."/>
            <person name="Yamada M."/>
            <person name="Yasuda M."/>
            <person name="Tabata S."/>
        </authorList>
    </citation>
    <scope>NUCLEOTIDE SEQUENCE [LARGE SCALE GENOMIC DNA]</scope>
    <source>
        <strain>cv. Columbia</strain>
    </source>
</reference>
<reference key="6">
    <citation type="journal article" date="2017" name="Plant J.">
        <title>Araport11: a complete reannotation of the Arabidopsis thaliana reference genome.</title>
        <authorList>
            <person name="Cheng C.Y."/>
            <person name="Krishnakumar V."/>
            <person name="Chan A.P."/>
            <person name="Thibaud-Nissen F."/>
            <person name="Schobel S."/>
            <person name="Town C.D."/>
        </authorList>
    </citation>
    <scope>GENOME REANNOTATION</scope>
    <source>
        <strain>cv. Columbia</strain>
    </source>
</reference>
<reference key="7">
    <citation type="journal article" date="2003" name="Science">
        <title>Empirical analysis of transcriptional activity in the Arabidopsis genome.</title>
        <authorList>
            <person name="Yamada K."/>
            <person name="Lim J."/>
            <person name="Dale J.M."/>
            <person name="Chen H."/>
            <person name="Shinn P."/>
            <person name="Palm C.J."/>
            <person name="Southwick A.M."/>
            <person name="Wu H.C."/>
            <person name="Kim C.J."/>
            <person name="Nguyen M."/>
            <person name="Pham P.K."/>
            <person name="Cheuk R.F."/>
            <person name="Karlin-Newmann G."/>
            <person name="Liu S.X."/>
            <person name="Lam B."/>
            <person name="Sakano H."/>
            <person name="Wu T."/>
            <person name="Yu G."/>
            <person name="Miranda M."/>
            <person name="Quach H.L."/>
            <person name="Tripp M."/>
            <person name="Chang C.H."/>
            <person name="Lee J.M."/>
            <person name="Toriumi M.J."/>
            <person name="Chan M.M."/>
            <person name="Tang C.C."/>
            <person name="Onodera C.S."/>
            <person name="Deng J.M."/>
            <person name="Akiyama K."/>
            <person name="Ansari Y."/>
            <person name="Arakawa T."/>
            <person name="Banh J."/>
            <person name="Banno F."/>
            <person name="Bowser L."/>
            <person name="Brooks S.Y."/>
            <person name="Carninci P."/>
            <person name="Chao Q."/>
            <person name="Choy N."/>
            <person name="Enju A."/>
            <person name="Goldsmith A.D."/>
            <person name="Gurjal M."/>
            <person name="Hansen N.F."/>
            <person name="Hayashizaki Y."/>
            <person name="Johnson-Hopson C."/>
            <person name="Hsuan V.W."/>
            <person name="Iida K."/>
            <person name="Karnes M."/>
            <person name="Khan S."/>
            <person name="Koesema E."/>
            <person name="Ishida J."/>
            <person name="Jiang P.X."/>
            <person name="Jones T."/>
            <person name="Kawai J."/>
            <person name="Kamiya A."/>
            <person name="Meyers C."/>
            <person name="Nakajima M."/>
            <person name="Narusaka M."/>
            <person name="Seki M."/>
            <person name="Sakurai T."/>
            <person name="Satou M."/>
            <person name="Tamse R."/>
            <person name="Vaysberg M."/>
            <person name="Wallender E.K."/>
            <person name="Wong C."/>
            <person name="Yamamura Y."/>
            <person name="Yuan S."/>
            <person name="Shinozaki K."/>
            <person name="Davis R.W."/>
            <person name="Theologis A."/>
            <person name="Ecker J.R."/>
        </authorList>
    </citation>
    <scope>NUCLEOTIDE SEQUENCE [LARGE SCALE MRNA]</scope>
    <source>
        <strain>cv. Columbia</strain>
    </source>
</reference>
<reference key="8">
    <citation type="submission" date="2006-03" db="EMBL/GenBank/DDBJ databases">
        <title>Arabidopsis ORF clones.</title>
        <authorList>
            <person name="Shinn P."/>
            <person name="Chen H."/>
            <person name="Kim C.J."/>
            <person name="Ecker J.R."/>
        </authorList>
    </citation>
    <scope>NUCLEOTIDE SEQUENCE [LARGE SCALE MRNA]</scope>
    <source>
        <strain>cv. Columbia</strain>
    </source>
</reference>
<reference key="9">
    <citation type="submission" date="2006-07" db="EMBL/GenBank/DDBJ databases">
        <title>Large-scale analysis of RIKEN Arabidopsis full-length (RAFL) cDNAs.</title>
        <authorList>
            <person name="Totoki Y."/>
            <person name="Seki M."/>
            <person name="Ishida J."/>
            <person name="Nakajima M."/>
            <person name="Enju A."/>
            <person name="Kamiya A."/>
            <person name="Narusaka M."/>
            <person name="Shin-i T."/>
            <person name="Nakagawa M."/>
            <person name="Sakamoto N."/>
            <person name="Oishi K."/>
            <person name="Kohara Y."/>
            <person name="Kobayashi M."/>
            <person name="Toyoda A."/>
            <person name="Sakaki Y."/>
            <person name="Sakurai T."/>
            <person name="Iida K."/>
            <person name="Akiyama K."/>
            <person name="Satou M."/>
            <person name="Toyoda T."/>
            <person name="Konagaya A."/>
            <person name="Carninci P."/>
            <person name="Kawai J."/>
            <person name="Hayashizaki Y."/>
            <person name="Shinozaki K."/>
        </authorList>
    </citation>
    <scope>NUCLEOTIDE SEQUENCE [LARGE SCALE MRNA]</scope>
    <source>
        <strain>cv. Columbia</strain>
    </source>
</reference>
<reference key="10">
    <citation type="submission" date="2002-03" db="EMBL/GenBank/DDBJ databases">
        <title>Full-length cDNA from Arabidopsis thaliana.</title>
        <authorList>
            <person name="Brover V.V."/>
            <person name="Troukhan M.E."/>
            <person name="Alexandrov N.A."/>
            <person name="Lu Y.-P."/>
            <person name="Flavell R.B."/>
            <person name="Feldmann K.A."/>
        </authorList>
    </citation>
    <scope>NUCLEOTIDE SEQUENCE [LARGE SCALE MRNA]</scope>
</reference>
<reference key="11">
    <citation type="journal article" date="1996" name="Plant J.">
        <title>The Arabidopsis cyclin-dependent kinase gene cdc2bAt is preferentially expressed during S and G2 phases of the cell cycle.</title>
        <authorList>
            <person name="Segers G."/>
            <person name="Gadisseur I."/>
            <person name="Bergounioux C."/>
            <person name="de Almeida Engler J."/>
            <person name="Jacqmard A."/>
            <person name="van Montagu M."/>
            <person name="Inze D."/>
        </authorList>
    </citation>
    <scope>TISSUE SPECIFICITY</scope>
    <scope>DEVELOPMENTAL STAGE</scope>
</reference>
<reference key="12">
    <citation type="journal article" date="1996" name="Plant J.">
        <title>Induction of cdc2a and cyc1At expression in Arabidopsis thaliana during early phases of nematode-induced feeding cell formation.</title>
        <authorList>
            <person name="Niebel A."/>
            <person name="de Almeida Engler J."/>
            <person name="Hemerly A.S."/>
            <person name="Ferreira P.C.G."/>
            <person name="Inze D."/>
            <person name="van Montagu M."/>
            <person name="Gheysen G."/>
        </authorList>
    </citation>
    <scope>INDUCTION</scope>
</reference>
<reference key="13">
    <citation type="journal article" date="1997" name="FEBS Lett.">
        <title>The Arabidopsis Cks1At protein binds the cyclin-dependent kinases Cdc2aAt and Cdc2bAt.</title>
        <authorList>
            <person name="de Veylder L."/>
            <person name="Segers G."/>
            <person name="Glab N."/>
            <person name="Casteels P."/>
            <person name="van Montagu M."/>
            <person name="Inze D."/>
        </authorList>
    </citation>
    <scope>INTERACTION WITH CKS1</scope>
</reference>
<reference key="14">
    <citation type="journal article" date="1997" name="Nature">
        <title>A plant cyclin-dependent kinase inhibitor gene.</title>
        <authorList>
            <person name="Wang H."/>
            <person name="Fowke L.C."/>
            <person name="Crosby W.L."/>
        </authorList>
    </citation>
    <scope>INTERACTION WITH KRP1/ICK1</scope>
</reference>
<reference key="15">
    <citation type="journal article" date="1998" name="Plant J.">
        <title>ICK1, a cyclin-dependent protein kinase inhibitor from Arabidopsis thaliana interacts with both Cdc2a and CycD3, and its expression is induced by abscisic acid.</title>
        <authorList>
            <person name="Wang H."/>
            <person name="Qi Q."/>
            <person name="Schorr P."/>
            <person name="Cutler A.J."/>
            <person name="Crosby W.L."/>
            <person name="Fowke L.C."/>
        </authorList>
    </citation>
    <scope>INTERACTION WITH KRP1/ICK1 AND CYCD3-1</scope>
</reference>
<reference key="16">
    <citation type="journal article" date="1999" name="FEBS Lett.">
        <title>Mutational analysis of two Arabidopsis thaliana cyclin-dependent kinases in fission yeast.</title>
        <authorList>
            <person name="Porceddu A."/>
            <person name="de Veylder L."/>
            <person name="Hayles J."/>
            <person name="van Montagu M."/>
            <person name="Inze D."/>
            <person name="Mironov V."/>
        </authorList>
    </citation>
    <scope>INTERACTION WITH CKS1 AND CYCD1-1</scope>
    <scope>MUTAGENESIS OF THR-14; TYR-15; ASP-146; PRO-156; THR-166 AND 234-LEU--ASP-236</scope>
</reference>
<reference key="17">
    <citation type="journal article" date="1999" name="Planta">
        <title>A new D-type cyclin of Arabidopsis thaliana expressed during lateral root primordia formation.</title>
        <authorList>
            <person name="de Veylder L."/>
            <person name="de Almeida Engler J."/>
            <person name="Burssens S."/>
            <person name="Manevski A."/>
            <person name="Lescure B."/>
            <person name="van Montagu M."/>
            <person name="Engler G."/>
            <person name="Inze D."/>
        </authorList>
    </citation>
    <scope>INTERACTION WITH CYCD4-1</scope>
</reference>
<reference key="18">
    <citation type="journal article" date="1999" name="Plant Cell">
        <title>An Arabidopsis cell cycle-dependent kinase-related gene, CDC2b, plays a role in regulating seedling growth in darkness.</title>
        <authorList>
            <person name="Yoshizumi T."/>
            <person name="Nagata N."/>
            <person name="Shimada H."/>
            <person name="Matsui M."/>
        </authorList>
    </citation>
    <scope>DEVELOPMENTAL STAGE</scope>
</reference>
<reference key="19">
    <citation type="journal article" date="2000" name="Planta">
        <title>Expression of cell cycle regulatory genes and morphological alterations in response to salt stress in Arabidopsis thaliana.</title>
        <authorList>
            <person name="Burssens S."/>
            <person name="Himanen K."/>
            <person name="van de Cotte B."/>
            <person name="Beeckman T."/>
            <person name="van Montagu M."/>
            <person name="Inze D."/>
            <person name="Verbruggen N."/>
        </authorList>
    </citation>
    <scope>INDUCTION</scope>
</reference>
<reference key="20">
    <citation type="journal article" date="2000" name="Plant J.">
        <title>The Arabidopsis Cdc2a-interacting protein ICK2 is structurally related to ICK1 and is a potent inhibitor of cyclin-dependent kinase activity in vitro.</title>
        <authorList>
            <person name="Lui H."/>
            <person name="Wang H."/>
            <person name="Delong C."/>
            <person name="Fowke L.C."/>
            <person name="Crosby W.L."/>
            <person name="Fobert P.R."/>
        </authorList>
    </citation>
    <scope>INTERACTION WITH KRP2/ICK2</scope>
</reference>
<reference key="21">
    <citation type="journal article" date="2000" name="Plant J.">
        <title>Cell division events are essential for embryo patterning and morphogenesis: studies on dominant-negative cdc2aAt mutants of Arabidopsis.</title>
        <authorList>
            <person name="Hemerly A.S."/>
            <person name="Ferreira P.C.G."/>
            <person name="van Montagu M."/>
            <person name="Engler G."/>
            <person name="Inze D."/>
        </authorList>
    </citation>
    <scope>FUNCTION</scope>
    <scope>MUTAGENESIS OF ASP-146</scope>
</reference>
<reference key="22">
    <citation type="journal article" date="2001" name="J. Biol. Chem.">
        <title>The Arabidopsis D-type cyclins CycD2 and CycD3 both interact in vivo with the PSTAIRE cyclin-dependent kinase Cdc2a but are differentially controlled.</title>
        <authorList>
            <person name="Healy J.M.S."/>
            <person name="Menges M."/>
            <person name="Doonan J.H."/>
            <person name="Murray J.A.H."/>
        </authorList>
    </citation>
    <scope>INTERACTION WITH CYCD2-1 AND CYCD3-1</scope>
</reference>
<reference key="23">
    <citation type="journal article" date="2001" name="Plant Cell">
        <title>Functional analysis of cyclin-dependent kinase inhibitors of Arabidopsis.</title>
        <authorList>
            <person name="de Veylder L."/>
            <person name="Beeckman T."/>
            <person name="Beemster G.T.S."/>
            <person name="Krols L."/>
            <person name="Terras F."/>
            <person name="Landrieu I."/>
            <person name="van der Schueren E."/>
            <person name="Maes S."/>
            <person name="Naudts M."/>
            <person name="Inze D."/>
        </authorList>
    </citation>
    <scope>INTERACTION WITH KRP1/ICK1; KRP2/ICK2; KRP3/ICK6; KRP4/ICK7; KRP6/ICK4 AND KRP7/ICK5</scope>
</reference>
<reference key="24">
    <citation type="journal article" date="2001" name="Plant J.">
        <title>CKS1At overexpression in Arabidopsis thaliana inhibits growth by reducing meristem size and inhibiting cell-cycle progression.</title>
        <authorList>
            <person name="de Veylder L."/>
            <person name="Beemster G.T.S."/>
            <person name="Beeckman T."/>
            <person name="Inze D."/>
        </authorList>
    </citation>
    <scope>INTERACTION WITH CKS1</scope>
</reference>
<reference key="25">
    <citation type="journal article" date="2001" name="Plant J.">
        <title>A cell-cycle-regulated kinase activity phosphorylates plant retinoblastoma protein and contains, in Arabidopsis, a CDKA/cyclin D complex.</title>
        <authorList>
            <person name="Boniotti M.B."/>
            <person name="Gutierrez C."/>
        </authorList>
    </citation>
    <scope>INTERACTION WITH CYCD2-1</scope>
</reference>
<reference key="26">
    <citation type="journal article" date="2002" name="Plant Cell">
        <title>Genome-wide analysis of core cell cycle genes in Arabidopsis.</title>
        <authorList>
            <person name="Vandepoele K."/>
            <person name="Raes J."/>
            <person name="de Veylder L."/>
            <person name="Rouze P."/>
            <person name="Rombauts S."/>
            <person name="Inze D."/>
        </authorList>
    </citation>
    <scope>GENE FAMILY</scope>
    <scope>NOMENCLATURE</scope>
</reference>
<reference key="27">
    <citation type="journal article" date="2003" name="Plant Cell">
        <title>Misexpression of the cyclin-dependent kinase inhibitor ICK1/KRP1 in single-celled Arabidopsis trichomes reduces endoreduplication and cell size and induces cell death.</title>
        <authorList>
            <person name="Schnittger A."/>
            <person name="Weinl C."/>
            <person name="Bouyer D."/>
            <person name="Schoebinger U."/>
            <person name="Huelskamp M."/>
        </authorList>
    </citation>
    <scope>INTERACTION WITH KRP1/ICK1</scope>
</reference>
<reference key="28">
    <citation type="journal article" date="2003" name="Plant Physiol.">
        <title>Arabidopsis D-type cyclin CYCD4;1 is a novel cyclin partner of B2-type cyclin-dependent kinase.</title>
        <authorList>
            <person name="Kono A."/>
            <person name="Umeda-Hara C."/>
            <person name="Lee J."/>
            <person name="Ito M."/>
            <person name="Uchimiya H."/>
            <person name="Umeda M."/>
        </authorList>
    </citation>
    <scope>INTERACTION WITH CYCD4-1</scope>
</reference>
<reference key="29">
    <citation type="journal article" date="2004" name="FEBS Lett.">
        <title>In vivo interaction between CDKA and eIF4A: a possible mechanism linking translation and cell proliferation.</title>
        <authorList>
            <person name="Hutchins A.P."/>
            <person name="Roberts G.R."/>
            <person name="Lloyd C.W."/>
            <person name="Doonan J.H."/>
        </authorList>
    </citation>
    <scope>INTERACTION WITH TIF4A-1/EIF4A-1</scope>
</reference>
<reference key="30">
    <citation type="journal article" date="2004" name="Cell. Mol. Life Sci.">
        <title>Molecular characterization of Arabidopsis PHO80-like proteins, a novel class of CDKA;1-interacting cyclins.</title>
        <authorList>
            <person name="Torres Acosta J.A."/>
            <person name="de Almeida Engler J."/>
            <person name="Raes J."/>
            <person name="Magyar Z."/>
            <person name="de Groodt R."/>
            <person name="Inze D."/>
            <person name="de Veylder L."/>
        </authorList>
    </citation>
    <scope>INTERACTION WITH CYCU1-1; CYCU2-1; CYCU2-2; CYCU3-1; CYCU4-1; CYCU4-2 AND CYCU4-3</scope>
</reference>
<reference key="31">
    <citation type="journal article" date="2004" name="Plant Cell">
        <title>DNA replication licensing affects cell proliferation or endoreplication in a cell type-specific manner.</title>
        <authorList>
            <person name="del Mar Castellano M."/>
            <person name="Boniotti M.B."/>
            <person name="Caro E."/>
            <person name="Schnittger A."/>
            <person name="Gutierrez C."/>
        </authorList>
    </citation>
    <scope>INTERACTION WITH CDT1A</scope>
    <source>
        <strain>cv. Columbia</strain>
    </source>
</reference>
<reference key="32">
    <citation type="journal article" date="2004" name="Plant Cell">
        <title>The plant-specific kinase CDKF;1 is involved in activating phosphorylation of cyclin-dependent kinase-activating kinases in Arabidopsis.</title>
        <authorList>
            <person name="Shimotohno A."/>
            <person name="Umeda-Hara C."/>
            <person name="Bisova K."/>
            <person name="Uchimiya H."/>
            <person name="Umeda M."/>
        </authorList>
    </citation>
    <scope>INTERACTION WITH CYCH1-1</scope>
</reference>
<reference key="33">
    <citation type="journal article" date="2005" name="Plant Cell">
        <title>The cyclin-dependent kinase inhibitor KRP2 controls the onset of the endoreduplication cycle during Arabidopsis leaf development through inhibition of mitotic CDKA;1 kinase complexes.</title>
        <authorList>
            <person name="Verkest A."/>
            <person name="de Oliveira Manes C.L."/>
            <person name="Vercruysse S."/>
            <person name="Maes S."/>
            <person name="van der Schueren E."/>
            <person name="Beeckman T."/>
            <person name="Genschik P."/>
            <person name="Kuiper M."/>
            <person name="Inze D."/>
            <person name="de Veylder L."/>
        </authorList>
    </citation>
    <scope>ACTIVITY REGULATION</scope>
    <scope>INTERACTION WITH KRP2/ICK2</scope>
    <scope>CATALYTIC ACTIVITY</scope>
</reference>
<reference key="34">
    <citation type="journal article" date="2006" name="Annu. Rev. Genet.">
        <title>Cell cycle regulation in plant development.</title>
        <authorList>
            <person name="Inze D."/>
            <person name="de Veylder L."/>
        </authorList>
    </citation>
    <scope>REVIEW</scope>
</reference>
<reference key="35">
    <citation type="journal article" date="2006" name="FEBS Lett.">
        <title>Arabidopsis KRPs have distinct inhibitory activity toward cyclin D2-associated kinases, including plant-specific B-type cyclin-dependent kinase.</title>
        <authorList>
            <person name="Nakai T."/>
            <person name="Kato K."/>
            <person name="Shinmyo A."/>
            <person name="Sekine M."/>
        </authorList>
    </citation>
    <scope>ACTIVITY REGULATION</scope>
</reference>
<reference key="36">
    <citation type="journal article" date="2006" name="Plant Cell">
        <title>The A-type cyclin CYCA2;3 is a key regulator of ploidy levels in Arabidopsis endoreduplication.</title>
        <authorList>
            <person name="Imai K.K."/>
            <person name="Ohashi Y."/>
            <person name="Tsuge T."/>
            <person name="Yoshizumi T."/>
            <person name="Matsui M."/>
            <person name="Oka A."/>
            <person name="Aoyama T."/>
        </authorList>
    </citation>
    <scope>SUBCELLULAR LOCATION</scope>
    <scope>INTERACTION WITH CYCA2-3</scope>
</reference>
<reference key="37">
    <citation type="journal article" date="2006" name="Plant Cell">
        <title>The D-type cyclin CYCD3;1 is limiting for the G1-to-S-phase transition in Arabidopsis.</title>
        <authorList>
            <person name="Menges M."/>
            <person name="Samland A.K."/>
            <person name="Planchais S."/>
            <person name="Murray J.A.H."/>
        </authorList>
    </citation>
    <scope>INTERACTION WITH CYCD3-1</scope>
</reference>
<reference key="38">
    <citation type="journal article" date="2006" name="Plant Cell">
        <title>Arabidopsis PASTICCINO2 is an antiphosphatase involved in regulation of cyclin-dependent kinase A.</title>
        <authorList>
            <person name="Da Costa M."/>
            <person name="Bach L."/>
            <person name="Landrieu I."/>
            <person name="Bellec Y."/>
            <person name="Catrice O."/>
            <person name="Brown S."/>
            <person name="De Veylder L."/>
            <person name="Lippens G."/>
            <person name="Inze D."/>
            <person name="Faure J.-D."/>
        </authorList>
    </citation>
    <scope>INTERACTION WITH PAS2</scope>
</reference>
<reference key="39">
    <citation type="journal article" date="2006" name="Plant Cell Rep.">
        <title>A distinct type of cyclin D, CYCD4;2, involved in the activation of cell division in Arabidopsis.</title>
        <authorList>
            <person name="Kono A."/>
            <person name="Ohno R."/>
            <person name="Umeda-Hara C."/>
            <person name="Uchimiya H."/>
            <person name="Umeda M."/>
        </authorList>
    </citation>
    <scope>INTERACTION WITH CYCD4-2</scope>
</reference>
<reference key="40">
    <citation type="journal article" date="2006" name="Plant J.">
        <title>Arabidopsis CDKA;1, a cdc2 homologue, controls proliferation of generative cells in male gametogenesis.</title>
        <authorList>
            <person name="Iwakawa H."/>
            <person name="Shinmyo A."/>
            <person name="Sekine M."/>
        </authorList>
    </citation>
    <scope>FUNCTION</scope>
    <scope>DISRUPTION PHENOTYPE</scope>
</reference>
<reference key="41">
    <citation type="journal article" date="2006" name="Plant J.">
        <title>Diverse phosphoregulatory mechanisms controlling cyclin-dependent kinase-activating kinases in Arabidopsis.</title>
        <authorList>
            <person name="Shimotohno A."/>
            <person name="Ohno R."/>
            <person name="Bisova K."/>
            <person name="Sakaguchi N."/>
            <person name="Huang J."/>
            <person name="Koncz C."/>
            <person name="Uchimiya H."/>
            <person name="Umeda M."/>
        </authorList>
    </citation>
    <scope>ACTIVITY REGULATION</scope>
    <scope>PHOSPHORYLATION AT TYR-15</scope>
    <scope>INTERACTION WITH CYCH1-1</scope>
    <scope>MUTAGENESIS OF TYR-15</scope>
    <scope>CATALYTIC ACTIVITY</scope>
</reference>
<reference key="42">
    <citation type="journal article" date="2006" name="Plant Mol. Biol.">
        <title>Molecular control of nuclear and subnuclear targeting of the plant CDK inhibitor ICK1 and ICK1-mediated nuclear transport of CDKA.</title>
        <authorList>
            <person name="Zhou Y."/>
            <person name="Niu H."/>
            <person name="Brandizzi F."/>
            <person name="Fowke L.C."/>
            <person name="Wang H."/>
        </authorList>
    </citation>
    <scope>SUBCELLULAR LOCATION</scope>
    <scope>INTERACTION WITH KRP1/ICK1</scope>
</reference>
<reference key="43">
    <citation type="journal article" date="2007" name="Plant Cell">
        <title>Arabidopsis WEE1 kinase controls cell cycle arrest in response to activation of the DNA integrity checkpoint.</title>
        <authorList>
            <person name="de Schutter K."/>
            <person name="Joubes J."/>
            <person name="Cools T."/>
            <person name="Verkest A."/>
            <person name="Corellou F."/>
            <person name="Babiychuk E."/>
            <person name="van der Schueren E."/>
            <person name="Beeckman T."/>
            <person name="Kushnir S."/>
            <person name="Inze D."/>
            <person name="de Veylder L."/>
        </authorList>
    </citation>
    <scope>INDUCTION</scope>
    <scope>PHOSPHORYLATION</scope>
    <scope>INTERACTION WITH WEE1</scope>
</reference>
<reference key="44">
    <citation type="journal article" date="2007" name="Plant Cell">
        <title>T-loop phosphorylation of Arabidopsis CDKA;1 is required for its function and can be partially substituted by an aspartate residue.</title>
        <authorList>
            <person name="Dissmeyer N."/>
            <person name="Nowack M.K."/>
            <person name="Pusch S."/>
            <person name="Stals H."/>
            <person name="Inze D."/>
            <person name="Grini P.E."/>
            <person name="Schnittger A."/>
        </authorList>
    </citation>
    <scope>FUNCTION</scope>
    <scope>PHOSPHORYLATION AT THR-161</scope>
    <scope>MUTAGENESIS OF THR-161</scope>
</reference>
<reference key="45">
    <citation type="journal article" date="2008" name="J. Proteome Res.">
        <title>Site-specific phosphorylation profiling of Arabidopsis proteins by mass spectrometry and peptide chip analysis.</title>
        <authorList>
            <person name="de la Fuente van Bentem S."/>
            <person name="Anrather D."/>
            <person name="Dohnal I."/>
            <person name="Roitinger E."/>
            <person name="Csaszar E."/>
            <person name="Joore J."/>
            <person name="Buijnink J."/>
            <person name="Carreri A."/>
            <person name="Forzani C."/>
            <person name="Lorkovic Z.J."/>
            <person name="Barta A."/>
            <person name="Lecourieux D."/>
            <person name="Verhounig A."/>
            <person name="Jonak C."/>
            <person name="Hirt H."/>
        </authorList>
    </citation>
    <scope>PHOSPHORYLATION [LARGE SCALE ANALYSIS] AT THR-161</scope>
    <scope>IDENTIFICATION BY MASS SPECTROMETRY [LARGE SCALE ANALYSIS]</scope>
    <source>
        <tissue>Root</tissue>
    </source>
</reference>
<reference key="46">
    <citation type="journal article" date="2009" name="J. Proteomics">
        <title>Phosphoproteomic analysis of nuclei-enriched fractions from Arabidopsis thaliana.</title>
        <authorList>
            <person name="Jones A.M.E."/>
            <person name="MacLean D."/>
            <person name="Studholme D.J."/>
            <person name="Serna-Sanz A."/>
            <person name="Andreasson E."/>
            <person name="Rathjen J.P."/>
            <person name="Peck S.C."/>
        </authorList>
    </citation>
    <scope>IDENTIFICATION BY MASS SPECTROMETRY [LARGE SCALE ANALYSIS]</scope>
    <source>
        <strain>cv. Columbia</strain>
    </source>
</reference>
<reference key="47">
    <citation type="journal article" date="2009" name="Plant Physiol.">
        <title>Large-scale Arabidopsis phosphoproteome profiling reveals novel chloroplast kinase substrates and phosphorylation networks.</title>
        <authorList>
            <person name="Reiland S."/>
            <person name="Messerli G."/>
            <person name="Baerenfaller K."/>
            <person name="Gerrits B."/>
            <person name="Endler A."/>
            <person name="Grossmann J."/>
            <person name="Gruissem W."/>
            <person name="Baginsky S."/>
        </authorList>
    </citation>
    <scope>IDENTIFICATION BY MASS SPECTROMETRY [LARGE SCALE ANALYSIS]</scope>
</reference>
<reference key="48">
    <citation type="journal article" date="2010" name="Mol. Syst. Biol.">
        <title>Targeted interactomics reveals a complex core cell cycle machinery in Arabidopsis thaliana.</title>
        <authorList>
            <person name="Van Leene J."/>
            <person name="Hollunder J."/>
            <person name="Eeckhout D."/>
            <person name="Persiau G."/>
            <person name="Van De Slijke E."/>
            <person name="Stals H."/>
            <person name="Van Isterdael G."/>
            <person name="Verkest A."/>
            <person name="Neirynck S."/>
            <person name="Buffel Y."/>
            <person name="De Bodt S."/>
            <person name="Maere S."/>
            <person name="Laukens K."/>
            <person name="Pharazyn A."/>
            <person name="Ferreira P.C.G."/>
            <person name="Eloy N."/>
            <person name="Renne C."/>
            <person name="Meyer C."/>
            <person name="Faure J.-D."/>
            <person name="Steinbrenner J."/>
            <person name="Beynon J."/>
            <person name="Larkin J.C."/>
            <person name="Van de Peer Y."/>
            <person name="Hilson P."/>
            <person name="Kuiper M."/>
            <person name="De Veylder L."/>
            <person name="Van Onckelen H."/>
            <person name="Inze D."/>
            <person name="Witters E."/>
            <person name="De Jaeger G."/>
        </authorList>
    </citation>
    <scope>INTERACTION WITH SMR3; SMR4; SMR5; SMR6; SMR8 AND AT4G14310</scope>
</reference>
<reference key="49">
    <citation type="journal article" date="2014" name="J. Exp. Bot.">
        <title>Requirement for A-type cyclin-dependent kinase and cyclins for the terminal division in the stomatal lineage of Arabidopsis.</title>
        <authorList>
            <person name="Yang K."/>
            <person name="Wang H."/>
            <person name="Xue S."/>
            <person name="Qu X."/>
            <person name="Zou J."/>
            <person name="Le J."/>
        </authorList>
    </citation>
    <scope>FUNCTION</scope>
    <scope>DISRUPTION PHENOTYPE</scope>
    <scope>INTERACTION WITH CYCD3-2</scope>
    <source>
        <strain>cv. Columbia</strain>
    </source>
</reference>
<reference key="50">
    <citation type="journal article" date="2015" name="EMBO J.">
        <title>Transcriptional repression by MYB3R proteins regulates plant organ growth.</title>
        <authorList>
            <person name="Kobayashi K."/>
            <person name="Suzuki T."/>
            <person name="Iwata E."/>
            <person name="Nakamichi N."/>
            <person name="Suzuki T."/>
            <person name="Chen P."/>
            <person name="Ohtani M."/>
            <person name="Ishida T."/>
            <person name="Hosoya H."/>
            <person name="Mueller S."/>
            <person name="Leviczky T."/>
            <person name="Pettko-Szandtner A."/>
            <person name="Darula Z."/>
            <person name="Iwamoto A."/>
            <person name="Nomoto M."/>
            <person name="Tada Y."/>
            <person name="Higashiyama T."/>
            <person name="Demura T."/>
            <person name="Doonan J.H."/>
            <person name="Hauser M.T."/>
            <person name="Sugimoto K."/>
            <person name="Umeda M."/>
            <person name="Magyar Z."/>
            <person name="Boegre L."/>
            <person name="Ito M."/>
        </authorList>
    </citation>
    <scope>INTERACTION WITH MYB3R3 AND MYB3R4</scope>
    <source>
        <strain>cv. Columbia</strain>
    </source>
</reference>
<reference key="51">
    <citation type="journal article" date="2015" name="Mol. Plant">
        <title>Phosphorylation of serine 186 of bHLH transcription factor SPEECHLESS promotes stomatal development in Arabidopsis.</title>
        <authorList>
            <person name="Yang K.-Z."/>
            <person name="Jiang M."/>
            <person name="Wang M."/>
            <person name="Xue S."/>
            <person name="Zhu L.-L."/>
            <person name="Wang H.-Z."/>
            <person name="Zou J.-J."/>
            <person name="Lee E.-K."/>
            <person name="Sack F."/>
            <person name="Le J."/>
        </authorList>
    </citation>
    <scope>FUNCTION</scope>
    <scope>DISRUPTION PHENOTYPE</scope>
    <scope>MUTAGENESIS OF ASP-146</scope>
    <scope>INTERACTION WITH SPCH</scope>
    <source>
        <strain>cv. Columbia</strain>
    </source>
</reference>
<name>CDKA1_ARATH</name>
<accession>P24100</accession>
<accession>Q29Q50</accession>
<accession>Q8RX68</accession>
<accession>Q9M307</accession>
<protein>
    <recommendedName>
        <fullName evidence="46">Cyclin-dependent kinase A-1</fullName>
        <shortName evidence="39">CDKA;1</shortName>
        <ecNumber evidence="19 27">2.7.11.22</ecNumber>
        <ecNumber evidence="19 27">2.7.11.23</ecNumber>
    </recommendedName>
    <alternativeName>
        <fullName evidence="40 43">Cell division control protein 2 homolog A</fullName>
        <shortName evidence="44">CDC2aAt</shortName>
    </alternativeName>
</protein>